<dbReference type="EMBL" id="CP000774">
    <property type="protein sequence ID" value="ABS62320.1"/>
    <property type="molecule type" value="Genomic_DNA"/>
</dbReference>
<dbReference type="RefSeq" id="WP_011995611.1">
    <property type="nucleotide sequence ID" value="NC_009719.1"/>
</dbReference>
<dbReference type="SMR" id="A7HQY7"/>
<dbReference type="STRING" id="402881.Plav_0697"/>
<dbReference type="KEGG" id="pla:Plav_0697"/>
<dbReference type="eggNOG" id="COG0356">
    <property type="taxonomic scope" value="Bacteria"/>
</dbReference>
<dbReference type="HOGENOM" id="CLU_041018_0_2_5"/>
<dbReference type="OrthoDB" id="9809130at2"/>
<dbReference type="Proteomes" id="UP000006377">
    <property type="component" value="Chromosome"/>
</dbReference>
<dbReference type="GO" id="GO:0005886">
    <property type="term" value="C:plasma membrane"/>
    <property type="evidence" value="ECO:0007669"/>
    <property type="project" value="UniProtKB-SubCell"/>
</dbReference>
<dbReference type="GO" id="GO:0045259">
    <property type="term" value="C:proton-transporting ATP synthase complex"/>
    <property type="evidence" value="ECO:0007669"/>
    <property type="project" value="UniProtKB-KW"/>
</dbReference>
<dbReference type="GO" id="GO:0046933">
    <property type="term" value="F:proton-transporting ATP synthase activity, rotational mechanism"/>
    <property type="evidence" value="ECO:0007669"/>
    <property type="project" value="UniProtKB-UniRule"/>
</dbReference>
<dbReference type="CDD" id="cd00310">
    <property type="entry name" value="ATP-synt_Fo_a_6"/>
    <property type="match status" value="1"/>
</dbReference>
<dbReference type="FunFam" id="1.20.120.220:FF:000003">
    <property type="entry name" value="ATP synthase subunit a"/>
    <property type="match status" value="1"/>
</dbReference>
<dbReference type="Gene3D" id="1.20.120.220">
    <property type="entry name" value="ATP synthase, F0 complex, subunit A"/>
    <property type="match status" value="1"/>
</dbReference>
<dbReference type="HAMAP" id="MF_01393">
    <property type="entry name" value="ATP_synth_a_bact"/>
    <property type="match status" value="1"/>
</dbReference>
<dbReference type="InterPro" id="IPR000568">
    <property type="entry name" value="ATP_synth_F0_asu"/>
</dbReference>
<dbReference type="InterPro" id="IPR023011">
    <property type="entry name" value="ATP_synth_F0_asu_AS"/>
</dbReference>
<dbReference type="InterPro" id="IPR045083">
    <property type="entry name" value="ATP_synth_F0_asu_bact/mt"/>
</dbReference>
<dbReference type="InterPro" id="IPR035908">
    <property type="entry name" value="F0_ATP_A_sf"/>
</dbReference>
<dbReference type="NCBIfam" id="TIGR01131">
    <property type="entry name" value="ATP_synt_6_or_A"/>
    <property type="match status" value="1"/>
</dbReference>
<dbReference type="NCBIfam" id="NF004482">
    <property type="entry name" value="PRK05815.2-4"/>
    <property type="match status" value="1"/>
</dbReference>
<dbReference type="PANTHER" id="PTHR11410">
    <property type="entry name" value="ATP SYNTHASE SUBUNIT A"/>
    <property type="match status" value="1"/>
</dbReference>
<dbReference type="PANTHER" id="PTHR11410:SF0">
    <property type="entry name" value="ATP SYNTHASE SUBUNIT A"/>
    <property type="match status" value="1"/>
</dbReference>
<dbReference type="Pfam" id="PF00119">
    <property type="entry name" value="ATP-synt_A"/>
    <property type="match status" value="1"/>
</dbReference>
<dbReference type="PRINTS" id="PR00123">
    <property type="entry name" value="ATPASEA"/>
</dbReference>
<dbReference type="SUPFAM" id="SSF81336">
    <property type="entry name" value="F1F0 ATP synthase subunit A"/>
    <property type="match status" value="1"/>
</dbReference>
<dbReference type="PROSITE" id="PS00449">
    <property type="entry name" value="ATPASE_A"/>
    <property type="match status" value="1"/>
</dbReference>
<keyword id="KW-0066">ATP synthesis</keyword>
<keyword id="KW-0997">Cell inner membrane</keyword>
<keyword id="KW-1003">Cell membrane</keyword>
<keyword id="KW-0138">CF(0)</keyword>
<keyword id="KW-0375">Hydrogen ion transport</keyword>
<keyword id="KW-0406">Ion transport</keyword>
<keyword id="KW-0472">Membrane</keyword>
<keyword id="KW-1185">Reference proteome</keyword>
<keyword id="KW-0812">Transmembrane</keyword>
<keyword id="KW-1133">Transmembrane helix</keyword>
<keyword id="KW-0813">Transport</keyword>
<feature type="chain" id="PRO_0000362362" description="ATP synthase subunit a">
    <location>
        <begin position="1"/>
        <end position="260"/>
    </location>
</feature>
<feature type="transmembrane region" description="Helical" evidence="1">
    <location>
        <begin position="37"/>
        <end position="57"/>
    </location>
</feature>
<feature type="transmembrane region" description="Helical" evidence="1">
    <location>
        <begin position="95"/>
        <end position="115"/>
    </location>
</feature>
<feature type="transmembrane region" description="Helical" evidence="1">
    <location>
        <begin position="125"/>
        <end position="145"/>
    </location>
</feature>
<feature type="transmembrane region" description="Helical" evidence="1">
    <location>
        <begin position="154"/>
        <end position="174"/>
    </location>
</feature>
<feature type="transmembrane region" description="Helical" evidence="1">
    <location>
        <begin position="191"/>
        <end position="211"/>
    </location>
</feature>
<feature type="transmembrane region" description="Helical" evidence="1">
    <location>
        <begin position="233"/>
        <end position="253"/>
    </location>
</feature>
<organism>
    <name type="scientific">Parvibaculum lavamentivorans (strain DS-1 / DSM 13023 / NCIMB 13966)</name>
    <dbReference type="NCBI Taxonomy" id="402881"/>
    <lineage>
        <taxon>Bacteria</taxon>
        <taxon>Pseudomonadati</taxon>
        <taxon>Pseudomonadota</taxon>
        <taxon>Alphaproteobacteria</taxon>
        <taxon>Hyphomicrobiales</taxon>
        <taxon>Parvibaculaceae</taxon>
        <taxon>Parvibaculum</taxon>
    </lineage>
</organism>
<protein>
    <recommendedName>
        <fullName evidence="1">ATP synthase subunit a</fullName>
    </recommendedName>
    <alternativeName>
        <fullName evidence="1">ATP synthase F0 sector subunit a</fullName>
    </alternativeName>
    <alternativeName>
        <fullName evidence="1">F-ATPase subunit 6</fullName>
    </alternativeName>
</protein>
<proteinExistence type="inferred from homology"/>
<evidence type="ECO:0000255" key="1">
    <source>
        <dbReference type="HAMAP-Rule" id="MF_01393"/>
    </source>
</evidence>
<comment type="function">
    <text evidence="1">Key component of the proton channel; it plays a direct role in the translocation of protons across the membrane.</text>
</comment>
<comment type="subunit">
    <text evidence="1">F-type ATPases have 2 components, CF(1) - the catalytic core - and CF(0) - the membrane proton channel. CF(1) has five subunits: alpha(3), beta(3), gamma(1), delta(1), epsilon(1). CF(0) has three main subunits: a(1), b(2) and c(9-12). The alpha and beta chains form an alternating ring which encloses part of the gamma chain. CF(1) is attached to CF(0) by a central stalk formed by the gamma and epsilon chains, while a peripheral stalk is formed by the delta and b chains.</text>
</comment>
<comment type="subcellular location">
    <subcellularLocation>
        <location evidence="1">Cell inner membrane</location>
        <topology evidence="1">Multi-pass membrane protein</topology>
    </subcellularLocation>
</comment>
<comment type="similarity">
    <text evidence="1">Belongs to the ATPase A chain family.</text>
</comment>
<accession>A7HQY7</accession>
<gene>
    <name evidence="1" type="primary">atpB</name>
    <name type="ordered locus">Plav_0697</name>
</gene>
<reference key="1">
    <citation type="journal article" date="2011" name="Stand. Genomic Sci.">
        <title>Complete genome sequence of Parvibaculum lavamentivorans type strain (DS-1(T)).</title>
        <authorList>
            <person name="Schleheck D."/>
            <person name="Weiss M."/>
            <person name="Pitluck S."/>
            <person name="Bruce D."/>
            <person name="Land M.L."/>
            <person name="Han S."/>
            <person name="Saunders E."/>
            <person name="Tapia R."/>
            <person name="Detter C."/>
            <person name="Brettin T."/>
            <person name="Han J."/>
            <person name="Woyke T."/>
            <person name="Goodwin L."/>
            <person name="Pennacchio L."/>
            <person name="Nolan M."/>
            <person name="Cook A.M."/>
            <person name="Kjelleberg S."/>
            <person name="Thomas T."/>
        </authorList>
    </citation>
    <scope>NUCLEOTIDE SEQUENCE [LARGE SCALE GENOMIC DNA]</scope>
    <source>
        <strain>DS-1 / DSM 13023 / NCIMB 13966</strain>
    </source>
</reference>
<name>ATP6_PARL1</name>
<sequence length="260" mass="28404">MATGAEQTGGGFPVDPLHQFVVQPLIPLNIGGLDASFTNASLWMVVTVVAIGLFMTLGMRSGAMVPGRMQSVVESFYTFIANMVRDNAGHDAMRFFPFIFSLFMFIFFANMIGMFPYAFTVTSHIVVTFALAIVVFLGVTLTGFVLHGPRFLKVFVPSGVPMALLPLVVAIEIISYFSRPISHSVRLFANMLAGHIMLKVFAGFVLTFMTMGVVGWAGMILPLFMIVALTALEFLVAALQAYVFTILTCMYLHDALHPGH</sequence>